<sequence length="241" mass="26401">MSNFAVSLPEVIAVLPAAGIGSRMLVDCPKQYLTVGGKTIIEHAIFSLLHHPRIQRVIVVIHPQDTQFSRLSVAQDPRISTVYGGDQRANSVMAGLQLAGQAEWVLVHDAARPCLHLDDLSRLLSITECSQVGGILAAPVRDTMKRAEPGIQAIAHTVDRQDLWHALTPQLFPLELLKLCLSRALREGVAVTDEASALEHCGYHPILVTGRSDNIKVTRPEDLALAEFYLTQRQSLNNDSL</sequence>
<keyword id="KW-0414">Isoprene biosynthesis</keyword>
<keyword id="KW-0548">Nucleotidyltransferase</keyword>
<keyword id="KW-0808">Transferase</keyword>
<accession>Q1CLR6</accession>
<accession>C4GPS2</accession>
<reference key="1">
    <citation type="journal article" date="2006" name="J. Bacteriol.">
        <title>Complete genome sequence of Yersinia pestis strains Antiqua and Nepal516: evidence of gene reduction in an emerging pathogen.</title>
        <authorList>
            <person name="Chain P.S.G."/>
            <person name="Hu P."/>
            <person name="Malfatti S.A."/>
            <person name="Radnedge L."/>
            <person name="Larimer F."/>
            <person name="Vergez L.M."/>
            <person name="Worsham P."/>
            <person name="Chu M.C."/>
            <person name="Andersen G.L."/>
        </authorList>
    </citation>
    <scope>NUCLEOTIDE SEQUENCE [LARGE SCALE GENOMIC DNA]</scope>
    <source>
        <strain>Nepal516</strain>
    </source>
</reference>
<reference key="2">
    <citation type="submission" date="2009-04" db="EMBL/GenBank/DDBJ databases">
        <title>Yersinia pestis Nepal516A whole genome shotgun sequencing project.</title>
        <authorList>
            <person name="Plunkett G. III"/>
            <person name="Anderson B.D."/>
            <person name="Baumler D.J."/>
            <person name="Burland V."/>
            <person name="Cabot E.L."/>
            <person name="Glasner J.D."/>
            <person name="Mau B."/>
            <person name="Neeno-Eckwall E."/>
            <person name="Perna N.T."/>
            <person name="Munk A.C."/>
            <person name="Tapia R."/>
            <person name="Green L.D."/>
            <person name="Rogers Y.C."/>
            <person name="Detter J.C."/>
            <person name="Bruce D.C."/>
            <person name="Brettin T.S."/>
        </authorList>
    </citation>
    <scope>NUCLEOTIDE SEQUENCE [LARGE SCALE GENOMIC DNA]</scope>
    <source>
        <strain>Nepal516</strain>
    </source>
</reference>
<comment type="function">
    <text evidence="1">Catalyzes the formation of 4-diphosphocytidyl-2-C-methyl-D-erythritol from CTP and 2-C-methyl-D-erythritol 4-phosphate (MEP).</text>
</comment>
<comment type="catalytic activity">
    <reaction evidence="1">
        <text>2-C-methyl-D-erythritol 4-phosphate + CTP + H(+) = 4-CDP-2-C-methyl-D-erythritol + diphosphate</text>
        <dbReference type="Rhea" id="RHEA:13429"/>
        <dbReference type="ChEBI" id="CHEBI:15378"/>
        <dbReference type="ChEBI" id="CHEBI:33019"/>
        <dbReference type="ChEBI" id="CHEBI:37563"/>
        <dbReference type="ChEBI" id="CHEBI:57823"/>
        <dbReference type="ChEBI" id="CHEBI:58262"/>
        <dbReference type="EC" id="2.7.7.60"/>
    </reaction>
</comment>
<comment type="pathway">
    <text evidence="1">Isoprenoid biosynthesis; isopentenyl diphosphate biosynthesis via DXP pathway; isopentenyl diphosphate from 1-deoxy-D-xylulose 5-phosphate: step 2/6.</text>
</comment>
<comment type="subunit">
    <text evidence="1">Homodimer.</text>
</comment>
<comment type="similarity">
    <text evidence="1">Belongs to the IspD/TarI cytidylyltransferase family. IspD subfamily.</text>
</comment>
<gene>
    <name evidence="1" type="primary">ispD</name>
    <name type="ordered locus">YPN_0732</name>
    <name type="ORF">YP516_0780</name>
</gene>
<proteinExistence type="inferred from homology"/>
<dbReference type="EC" id="2.7.7.60" evidence="1"/>
<dbReference type="EMBL" id="CP000305">
    <property type="protein sequence ID" value="ABG17064.1"/>
    <property type="molecule type" value="Genomic_DNA"/>
</dbReference>
<dbReference type="EMBL" id="ACNQ01000007">
    <property type="protein sequence ID" value="EEO77928.1"/>
    <property type="molecule type" value="Genomic_DNA"/>
</dbReference>
<dbReference type="RefSeq" id="WP_002209391.1">
    <property type="nucleotide sequence ID" value="NZ_ACNQ01000007.1"/>
</dbReference>
<dbReference type="SMR" id="Q1CLR6"/>
<dbReference type="GeneID" id="57975348"/>
<dbReference type="KEGG" id="ypn:YPN_0732"/>
<dbReference type="HOGENOM" id="CLU_061281_3_1_6"/>
<dbReference type="UniPathway" id="UPA00056">
    <property type="reaction ID" value="UER00093"/>
</dbReference>
<dbReference type="Proteomes" id="UP000008936">
    <property type="component" value="Chromosome"/>
</dbReference>
<dbReference type="GO" id="GO:0050518">
    <property type="term" value="F:2-C-methyl-D-erythritol 4-phosphate cytidylyltransferase activity"/>
    <property type="evidence" value="ECO:0007669"/>
    <property type="project" value="UniProtKB-UniRule"/>
</dbReference>
<dbReference type="GO" id="GO:0019288">
    <property type="term" value="P:isopentenyl diphosphate biosynthetic process, methylerythritol 4-phosphate pathway"/>
    <property type="evidence" value="ECO:0007669"/>
    <property type="project" value="UniProtKB-UniRule"/>
</dbReference>
<dbReference type="CDD" id="cd02516">
    <property type="entry name" value="CDP-ME_synthetase"/>
    <property type="match status" value="1"/>
</dbReference>
<dbReference type="FunFam" id="3.90.550.10:FF:000003">
    <property type="entry name" value="2-C-methyl-D-erythritol 4-phosphate cytidylyltransferase"/>
    <property type="match status" value="1"/>
</dbReference>
<dbReference type="Gene3D" id="3.90.550.10">
    <property type="entry name" value="Spore Coat Polysaccharide Biosynthesis Protein SpsA, Chain A"/>
    <property type="match status" value="1"/>
</dbReference>
<dbReference type="HAMAP" id="MF_00108">
    <property type="entry name" value="IspD"/>
    <property type="match status" value="1"/>
</dbReference>
<dbReference type="InterPro" id="IPR001228">
    <property type="entry name" value="IspD"/>
</dbReference>
<dbReference type="InterPro" id="IPR034683">
    <property type="entry name" value="IspD/TarI"/>
</dbReference>
<dbReference type="InterPro" id="IPR050088">
    <property type="entry name" value="IspD/TarI_cytidylyltransf_bact"/>
</dbReference>
<dbReference type="InterPro" id="IPR018294">
    <property type="entry name" value="ISPD_synthase_CS"/>
</dbReference>
<dbReference type="InterPro" id="IPR029044">
    <property type="entry name" value="Nucleotide-diphossugar_trans"/>
</dbReference>
<dbReference type="NCBIfam" id="TIGR00453">
    <property type="entry name" value="ispD"/>
    <property type="match status" value="1"/>
</dbReference>
<dbReference type="PANTHER" id="PTHR32125">
    <property type="entry name" value="2-C-METHYL-D-ERYTHRITOL 4-PHOSPHATE CYTIDYLYLTRANSFERASE, CHLOROPLASTIC"/>
    <property type="match status" value="1"/>
</dbReference>
<dbReference type="PANTHER" id="PTHR32125:SF4">
    <property type="entry name" value="2-C-METHYL-D-ERYTHRITOL 4-PHOSPHATE CYTIDYLYLTRANSFERASE, CHLOROPLASTIC"/>
    <property type="match status" value="1"/>
</dbReference>
<dbReference type="Pfam" id="PF01128">
    <property type="entry name" value="IspD"/>
    <property type="match status" value="1"/>
</dbReference>
<dbReference type="SUPFAM" id="SSF53448">
    <property type="entry name" value="Nucleotide-diphospho-sugar transferases"/>
    <property type="match status" value="1"/>
</dbReference>
<dbReference type="PROSITE" id="PS01295">
    <property type="entry name" value="ISPD"/>
    <property type="match status" value="1"/>
</dbReference>
<evidence type="ECO:0000255" key="1">
    <source>
        <dbReference type="HAMAP-Rule" id="MF_00108"/>
    </source>
</evidence>
<organism>
    <name type="scientific">Yersinia pestis bv. Antiqua (strain Nepal516)</name>
    <dbReference type="NCBI Taxonomy" id="377628"/>
    <lineage>
        <taxon>Bacteria</taxon>
        <taxon>Pseudomonadati</taxon>
        <taxon>Pseudomonadota</taxon>
        <taxon>Gammaproteobacteria</taxon>
        <taxon>Enterobacterales</taxon>
        <taxon>Yersiniaceae</taxon>
        <taxon>Yersinia</taxon>
    </lineage>
</organism>
<protein>
    <recommendedName>
        <fullName evidence="1">2-C-methyl-D-erythritol 4-phosphate cytidylyltransferase</fullName>
        <ecNumber evidence="1">2.7.7.60</ecNumber>
    </recommendedName>
    <alternativeName>
        <fullName evidence="1">4-diphosphocytidyl-2C-methyl-D-erythritol synthase</fullName>
    </alternativeName>
    <alternativeName>
        <fullName evidence="1">MEP cytidylyltransferase</fullName>
        <shortName evidence="1">MCT</shortName>
    </alternativeName>
</protein>
<feature type="chain" id="PRO_1000022958" description="2-C-methyl-D-erythritol 4-phosphate cytidylyltransferase">
    <location>
        <begin position="1"/>
        <end position="241"/>
    </location>
</feature>
<feature type="site" description="Transition state stabilizer" evidence="1">
    <location>
        <position position="23"/>
    </location>
</feature>
<feature type="site" description="Transition state stabilizer" evidence="1">
    <location>
        <position position="30"/>
    </location>
</feature>
<feature type="site" description="Positions MEP for the nucleophilic attack" evidence="1">
    <location>
        <position position="160"/>
    </location>
</feature>
<feature type="site" description="Positions MEP for the nucleophilic attack" evidence="1">
    <location>
        <position position="216"/>
    </location>
</feature>
<name>ISPD_YERPN</name>